<name>GCH1L_ECOL6</name>
<gene>
    <name type="primary">ybgI</name>
    <name type="ordered locus">c0789</name>
</gene>
<accession>P0AFP7</accession>
<accession>P75743</accession>
<sequence length="247" mass="26892">MKNTELEQLINEKLNSAAISDYAPNGLQVEGKETVQKIVTGVTASQALLDEAVRLGADAVIVHHGYFWKGESPVIRGMKRNRLKTLLANDINLYGWHLPLDAHPELGNNAQLAALLGITVMGEIEPLVPWGELTMPVPGLELASWIEARLGRKPLWCGDTGPEVVQRVAWCTGGGQSFIDSAARFGVDAFITGEVSEQTIHSAREQGLHFYAAGHHATERGGIRALSEWLNENTDLDVTFIDIPNPA</sequence>
<evidence type="ECO:0000250" key="1">
    <source>
        <dbReference type="UniProtKB" id="P0AFP6"/>
    </source>
</evidence>
<evidence type="ECO:0000305" key="2"/>
<protein>
    <recommendedName>
        <fullName>GTP cyclohydrolase 1 type 2 homolog</fullName>
    </recommendedName>
</protein>
<dbReference type="EMBL" id="AE014075">
    <property type="protein sequence ID" value="AAN79262.1"/>
    <property type="molecule type" value="Genomic_DNA"/>
</dbReference>
<dbReference type="RefSeq" id="WP_000798871.1">
    <property type="nucleotide sequence ID" value="NZ_CP051263.1"/>
</dbReference>
<dbReference type="SMR" id="P0AFP7"/>
<dbReference type="STRING" id="199310.c0789"/>
<dbReference type="GeneID" id="75205542"/>
<dbReference type="KEGG" id="ecc:c0789"/>
<dbReference type="eggNOG" id="COG0327">
    <property type="taxonomic scope" value="Bacteria"/>
</dbReference>
<dbReference type="HOGENOM" id="CLU_037423_3_0_6"/>
<dbReference type="BioCyc" id="ECOL199310:C0789-MONOMER"/>
<dbReference type="Proteomes" id="UP000001410">
    <property type="component" value="Chromosome"/>
</dbReference>
<dbReference type="GO" id="GO:0005737">
    <property type="term" value="C:cytoplasm"/>
    <property type="evidence" value="ECO:0007669"/>
    <property type="project" value="TreeGrafter"/>
</dbReference>
<dbReference type="GO" id="GO:0046872">
    <property type="term" value="F:metal ion binding"/>
    <property type="evidence" value="ECO:0007669"/>
    <property type="project" value="UniProtKB-KW"/>
</dbReference>
<dbReference type="GO" id="GO:0006281">
    <property type="term" value="P:DNA repair"/>
    <property type="evidence" value="ECO:0007669"/>
    <property type="project" value="UniProtKB-KW"/>
</dbReference>
<dbReference type="FunFam" id="3.40.1390.30:FF:000002">
    <property type="entry name" value="Nif3-like dinuclear metal center protein"/>
    <property type="match status" value="1"/>
</dbReference>
<dbReference type="FunFam" id="3.40.1390.30:FF:000003">
    <property type="entry name" value="Nif3-like dinuclear metal center protein"/>
    <property type="match status" value="1"/>
</dbReference>
<dbReference type="Gene3D" id="3.40.1390.30">
    <property type="entry name" value="NIF3 (NGG1p interacting factor 3)-like"/>
    <property type="match status" value="2"/>
</dbReference>
<dbReference type="InterPro" id="IPR002678">
    <property type="entry name" value="DUF34/NIF3"/>
</dbReference>
<dbReference type="InterPro" id="IPR036069">
    <property type="entry name" value="DUF34/NIF3_sf"/>
</dbReference>
<dbReference type="NCBIfam" id="NF008064">
    <property type="entry name" value="PRK10799.1"/>
    <property type="match status" value="1"/>
</dbReference>
<dbReference type="NCBIfam" id="TIGR00486">
    <property type="entry name" value="YbgI_SA1388"/>
    <property type="match status" value="1"/>
</dbReference>
<dbReference type="PANTHER" id="PTHR13799:SF14">
    <property type="entry name" value="GTP CYCLOHYDROLASE 1 TYPE 2 HOMOLOG"/>
    <property type="match status" value="1"/>
</dbReference>
<dbReference type="PANTHER" id="PTHR13799">
    <property type="entry name" value="NGG1 INTERACTING FACTOR 3"/>
    <property type="match status" value="1"/>
</dbReference>
<dbReference type="Pfam" id="PF01784">
    <property type="entry name" value="DUF34_NIF3"/>
    <property type="match status" value="1"/>
</dbReference>
<dbReference type="SUPFAM" id="SSF102705">
    <property type="entry name" value="NIF3 (NGG1p interacting factor 3)-like"/>
    <property type="match status" value="1"/>
</dbReference>
<feature type="chain" id="PRO_0000147309" description="GTP cyclohydrolase 1 type 2 homolog">
    <location>
        <begin position="1"/>
        <end position="247"/>
    </location>
</feature>
<feature type="binding site" evidence="1">
    <location>
        <position position="63"/>
    </location>
    <ligand>
        <name>a divalent metal cation</name>
        <dbReference type="ChEBI" id="CHEBI:60240"/>
        <label>1</label>
    </ligand>
</feature>
<feature type="binding site" evidence="1">
    <location>
        <position position="64"/>
    </location>
    <ligand>
        <name>a divalent metal cation</name>
        <dbReference type="ChEBI" id="CHEBI:60240"/>
        <label>2</label>
    </ligand>
</feature>
<feature type="binding site" evidence="1">
    <location>
        <position position="101"/>
    </location>
    <ligand>
        <name>a divalent metal cation</name>
        <dbReference type="ChEBI" id="CHEBI:60240"/>
        <label>1</label>
    </ligand>
</feature>
<feature type="binding site" evidence="1">
    <location>
        <position position="215"/>
    </location>
    <ligand>
        <name>a divalent metal cation</name>
        <dbReference type="ChEBI" id="CHEBI:60240"/>
        <label>2</label>
    </ligand>
</feature>
<feature type="binding site" evidence="1">
    <location>
        <position position="219"/>
    </location>
    <ligand>
        <name>a divalent metal cation</name>
        <dbReference type="ChEBI" id="CHEBI:60240"/>
        <label>1</label>
    </ligand>
</feature>
<feature type="binding site" evidence="1">
    <location>
        <position position="219"/>
    </location>
    <ligand>
        <name>a divalent metal cation</name>
        <dbReference type="ChEBI" id="CHEBI:60240"/>
        <label>2</label>
    </ligand>
</feature>
<comment type="function">
    <text evidence="1">Provides significant protection from radiation damage and may be involved in the degradation of radiation-damaged nucleotides.</text>
</comment>
<comment type="subunit">
    <text evidence="1">Toroid-shaped homohexamer. In the hexamer, 3 dimers assemble to form a ring-like structure surrounding a central hole.</text>
</comment>
<comment type="similarity">
    <text evidence="2">Belongs to the GTP cyclohydrolase I type 2/NIF3 family.</text>
</comment>
<proteinExistence type="inferred from homology"/>
<reference key="1">
    <citation type="journal article" date="2002" name="Proc. Natl. Acad. Sci. U.S.A.">
        <title>Extensive mosaic structure revealed by the complete genome sequence of uropathogenic Escherichia coli.</title>
        <authorList>
            <person name="Welch R.A."/>
            <person name="Burland V."/>
            <person name="Plunkett G. III"/>
            <person name="Redford P."/>
            <person name="Roesch P."/>
            <person name="Rasko D."/>
            <person name="Buckles E.L."/>
            <person name="Liou S.-R."/>
            <person name="Boutin A."/>
            <person name="Hackett J."/>
            <person name="Stroud D."/>
            <person name="Mayhew G.F."/>
            <person name="Rose D.J."/>
            <person name="Zhou S."/>
            <person name="Schwartz D.C."/>
            <person name="Perna N.T."/>
            <person name="Mobley H.L.T."/>
            <person name="Donnenberg M.S."/>
            <person name="Blattner F.R."/>
        </authorList>
    </citation>
    <scope>NUCLEOTIDE SEQUENCE [LARGE SCALE GENOMIC DNA]</scope>
    <source>
        <strain>CFT073 / ATCC 700928 / UPEC</strain>
    </source>
</reference>
<organism>
    <name type="scientific">Escherichia coli O6:H1 (strain CFT073 / ATCC 700928 / UPEC)</name>
    <dbReference type="NCBI Taxonomy" id="199310"/>
    <lineage>
        <taxon>Bacteria</taxon>
        <taxon>Pseudomonadati</taxon>
        <taxon>Pseudomonadota</taxon>
        <taxon>Gammaproteobacteria</taxon>
        <taxon>Enterobacterales</taxon>
        <taxon>Enterobacteriaceae</taxon>
        <taxon>Escherichia</taxon>
    </lineage>
</organism>
<keyword id="KW-0227">DNA damage</keyword>
<keyword id="KW-0234">DNA repair</keyword>
<keyword id="KW-0479">Metal-binding</keyword>
<keyword id="KW-1185">Reference proteome</keyword>